<keyword id="KW-0030">Aminoacyl-tRNA synthetase</keyword>
<keyword id="KW-0067">ATP-binding</keyword>
<keyword id="KW-0963">Cytoplasm</keyword>
<keyword id="KW-0436">Ligase</keyword>
<keyword id="KW-0547">Nucleotide-binding</keyword>
<keyword id="KW-0648">Protein biosynthesis</keyword>
<reference key="1">
    <citation type="journal article" date="2009" name="PLoS ONE">
        <title>Genome sequence of the endosymbiont Rickettsia peacockii and comparison with virulent Rickettsia rickettsii: identification of virulence factors.</title>
        <authorList>
            <person name="Felsheim R.F."/>
            <person name="Kurtti T.J."/>
            <person name="Munderloh U.G."/>
        </authorList>
    </citation>
    <scope>NUCLEOTIDE SEQUENCE [LARGE SCALE GENOMIC DNA]</scope>
    <source>
        <strain>Rustic</strain>
    </source>
</reference>
<proteinExistence type="inferred from homology"/>
<accession>C4K208</accession>
<organism>
    <name type="scientific">Rickettsia peacockii (strain Rustic)</name>
    <dbReference type="NCBI Taxonomy" id="562019"/>
    <lineage>
        <taxon>Bacteria</taxon>
        <taxon>Pseudomonadati</taxon>
        <taxon>Pseudomonadota</taxon>
        <taxon>Alphaproteobacteria</taxon>
        <taxon>Rickettsiales</taxon>
        <taxon>Rickettsiaceae</taxon>
        <taxon>Rickettsieae</taxon>
        <taxon>Rickettsia</taxon>
        <taxon>spotted fever group</taxon>
    </lineage>
</organism>
<sequence length="425" mass="48588">MLNIKWIRENKELFDEKLSQRFIEPMSSKIAMLDREKRKITSLIQEFQHARKVKSKILGNMASKSGEEFEGLQRDVKHINEKLEALEHDLNNNNELNELLNMFPNIPDEEVPYGMDESMNKLVRTYGETNPNALNKQHFELGIKLNLMDFEQTAKISGTRFVTLKGDLAKLERALINFMIDVHTKEWDFFEISPPVLVRDNAMYNAGQLPKFAEESFATTNGYRLIPTAEVSLVNMVADTIIPREKLPIRYVAYTPCFRSEAGSSGRDTRGMIRLHQFGKVELVSITTPEESTNEHEYITNASETILQKLNLPYRVMLLCTGDMGFAAKKTYDIEVWLPGQKQYREIASCSNCGDFQARRMKARYKEFGSNETTLVHTLNASGLPIGRTMVAILENYQNEDGSITIPDVLINYMGGLQKIIAYSE</sequence>
<evidence type="ECO:0000255" key="1">
    <source>
        <dbReference type="HAMAP-Rule" id="MF_00176"/>
    </source>
</evidence>
<dbReference type="EC" id="6.1.1.11" evidence="1"/>
<dbReference type="EMBL" id="CP001227">
    <property type="protein sequence ID" value="ACR47606.1"/>
    <property type="molecule type" value="Genomic_DNA"/>
</dbReference>
<dbReference type="RefSeq" id="WP_012736821.1">
    <property type="nucleotide sequence ID" value="NC_012730.1"/>
</dbReference>
<dbReference type="SMR" id="C4K208"/>
<dbReference type="KEGG" id="rpk:RPR_04825"/>
<dbReference type="HOGENOM" id="CLU_023797_1_1_5"/>
<dbReference type="UniPathway" id="UPA00906">
    <property type="reaction ID" value="UER00895"/>
</dbReference>
<dbReference type="Proteomes" id="UP000005015">
    <property type="component" value="Chromosome"/>
</dbReference>
<dbReference type="GO" id="GO:0005737">
    <property type="term" value="C:cytoplasm"/>
    <property type="evidence" value="ECO:0007669"/>
    <property type="project" value="UniProtKB-SubCell"/>
</dbReference>
<dbReference type="GO" id="GO:0005524">
    <property type="term" value="F:ATP binding"/>
    <property type="evidence" value="ECO:0007669"/>
    <property type="project" value="UniProtKB-UniRule"/>
</dbReference>
<dbReference type="GO" id="GO:0004828">
    <property type="term" value="F:serine-tRNA ligase activity"/>
    <property type="evidence" value="ECO:0007669"/>
    <property type="project" value="UniProtKB-UniRule"/>
</dbReference>
<dbReference type="GO" id="GO:0016260">
    <property type="term" value="P:selenocysteine biosynthetic process"/>
    <property type="evidence" value="ECO:0007669"/>
    <property type="project" value="UniProtKB-UniRule"/>
</dbReference>
<dbReference type="GO" id="GO:0006434">
    <property type="term" value="P:seryl-tRNA aminoacylation"/>
    <property type="evidence" value="ECO:0007669"/>
    <property type="project" value="UniProtKB-UniRule"/>
</dbReference>
<dbReference type="CDD" id="cd00770">
    <property type="entry name" value="SerRS_core"/>
    <property type="match status" value="1"/>
</dbReference>
<dbReference type="Gene3D" id="3.30.930.10">
    <property type="entry name" value="Bira Bifunctional Protein, Domain 2"/>
    <property type="match status" value="1"/>
</dbReference>
<dbReference type="Gene3D" id="1.10.287.40">
    <property type="entry name" value="Serine-tRNA synthetase, tRNA binding domain"/>
    <property type="match status" value="1"/>
</dbReference>
<dbReference type="HAMAP" id="MF_00176">
    <property type="entry name" value="Ser_tRNA_synth_type1"/>
    <property type="match status" value="1"/>
</dbReference>
<dbReference type="InterPro" id="IPR002314">
    <property type="entry name" value="aa-tRNA-synt_IIb"/>
</dbReference>
<dbReference type="InterPro" id="IPR006195">
    <property type="entry name" value="aa-tRNA-synth_II"/>
</dbReference>
<dbReference type="InterPro" id="IPR045864">
    <property type="entry name" value="aa-tRNA-synth_II/BPL/LPL"/>
</dbReference>
<dbReference type="InterPro" id="IPR002317">
    <property type="entry name" value="Ser-tRNA-ligase_type_1"/>
</dbReference>
<dbReference type="InterPro" id="IPR015866">
    <property type="entry name" value="Ser-tRNA-synth_1_N"/>
</dbReference>
<dbReference type="InterPro" id="IPR042103">
    <property type="entry name" value="SerRS_1_N_sf"/>
</dbReference>
<dbReference type="InterPro" id="IPR033729">
    <property type="entry name" value="SerRS_core"/>
</dbReference>
<dbReference type="InterPro" id="IPR010978">
    <property type="entry name" value="tRNA-bd_arm"/>
</dbReference>
<dbReference type="NCBIfam" id="TIGR00414">
    <property type="entry name" value="serS"/>
    <property type="match status" value="1"/>
</dbReference>
<dbReference type="PANTHER" id="PTHR43697:SF1">
    <property type="entry name" value="SERINE--TRNA LIGASE"/>
    <property type="match status" value="1"/>
</dbReference>
<dbReference type="PANTHER" id="PTHR43697">
    <property type="entry name" value="SERYL-TRNA SYNTHETASE"/>
    <property type="match status" value="1"/>
</dbReference>
<dbReference type="Pfam" id="PF02403">
    <property type="entry name" value="Seryl_tRNA_N"/>
    <property type="match status" value="1"/>
</dbReference>
<dbReference type="Pfam" id="PF00587">
    <property type="entry name" value="tRNA-synt_2b"/>
    <property type="match status" value="1"/>
</dbReference>
<dbReference type="PIRSF" id="PIRSF001529">
    <property type="entry name" value="Ser-tRNA-synth_IIa"/>
    <property type="match status" value="1"/>
</dbReference>
<dbReference type="PRINTS" id="PR00981">
    <property type="entry name" value="TRNASYNTHSER"/>
</dbReference>
<dbReference type="SUPFAM" id="SSF55681">
    <property type="entry name" value="Class II aaRS and biotin synthetases"/>
    <property type="match status" value="1"/>
</dbReference>
<dbReference type="SUPFAM" id="SSF46589">
    <property type="entry name" value="tRNA-binding arm"/>
    <property type="match status" value="1"/>
</dbReference>
<dbReference type="PROSITE" id="PS50862">
    <property type="entry name" value="AA_TRNA_LIGASE_II"/>
    <property type="match status" value="1"/>
</dbReference>
<gene>
    <name evidence="1" type="primary">serS</name>
    <name type="ordered locus">RPR_04825</name>
</gene>
<protein>
    <recommendedName>
        <fullName evidence="1">Serine--tRNA ligase</fullName>
        <ecNumber evidence="1">6.1.1.11</ecNumber>
    </recommendedName>
    <alternativeName>
        <fullName evidence="1">Seryl-tRNA synthetase</fullName>
        <shortName evidence="1">SerRS</shortName>
    </alternativeName>
    <alternativeName>
        <fullName evidence="1">Seryl-tRNA(Ser/Sec) synthetase</fullName>
    </alternativeName>
</protein>
<feature type="chain" id="PRO_1000203767" description="Serine--tRNA ligase">
    <location>
        <begin position="1"/>
        <end position="425"/>
    </location>
</feature>
<feature type="binding site" evidence="1">
    <location>
        <begin position="228"/>
        <end position="230"/>
    </location>
    <ligand>
        <name>L-serine</name>
        <dbReference type="ChEBI" id="CHEBI:33384"/>
    </ligand>
</feature>
<feature type="binding site" evidence="1">
    <location>
        <begin position="259"/>
        <end position="261"/>
    </location>
    <ligand>
        <name>ATP</name>
        <dbReference type="ChEBI" id="CHEBI:30616"/>
    </ligand>
</feature>
<feature type="binding site" evidence="1">
    <location>
        <position position="282"/>
    </location>
    <ligand>
        <name>L-serine</name>
        <dbReference type="ChEBI" id="CHEBI:33384"/>
    </ligand>
</feature>
<feature type="binding site" evidence="1">
    <location>
        <begin position="346"/>
        <end position="349"/>
    </location>
    <ligand>
        <name>ATP</name>
        <dbReference type="ChEBI" id="CHEBI:30616"/>
    </ligand>
</feature>
<feature type="binding site" evidence="1">
    <location>
        <position position="382"/>
    </location>
    <ligand>
        <name>L-serine</name>
        <dbReference type="ChEBI" id="CHEBI:33384"/>
    </ligand>
</feature>
<comment type="function">
    <text evidence="1">Catalyzes the attachment of serine to tRNA(Ser). Is also able to aminoacylate tRNA(Sec) with serine, to form the misacylated tRNA L-seryl-tRNA(Sec), which will be further converted into selenocysteinyl-tRNA(Sec).</text>
</comment>
<comment type="catalytic activity">
    <reaction evidence="1">
        <text>tRNA(Ser) + L-serine + ATP = L-seryl-tRNA(Ser) + AMP + diphosphate + H(+)</text>
        <dbReference type="Rhea" id="RHEA:12292"/>
        <dbReference type="Rhea" id="RHEA-COMP:9669"/>
        <dbReference type="Rhea" id="RHEA-COMP:9703"/>
        <dbReference type="ChEBI" id="CHEBI:15378"/>
        <dbReference type="ChEBI" id="CHEBI:30616"/>
        <dbReference type="ChEBI" id="CHEBI:33019"/>
        <dbReference type="ChEBI" id="CHEBI:33384"/>
        <dbReference type="ChEBI" id="CHEBI:78442"/>
        <dbReference type="ChEBI" id="CHEBI:78533"/>
        <dbReference type="ChEBI" id="CHEBI:456215"/>
        <dbReference type="EC" id="6.1.1.11"/>
    </reaction>
</comment>
<comment type="catalytic activity">
    <reaction evidence="1">
        <text>tRNA(Sec) + L-serine + ATP = L-seryl-tRNA(Sec) + AMP + diphosphate + H(+)</text>
        <dbReference type="Rhea" id="RHEA:42580"/>
        <dbReference type="Rhea" id="RHEA-COMP:9742"/>
        <dbReference type="Rhea" id="RHEA-COMP:10128"/>
        <dbReference type="ChEBI" id="CHEBI:15378"/>
        <dbReference type="ChEBI" id="CHEBI:30616"/>
        <dbReference type="ChEBI" id="CHEBI:33019"/>
        <dbReference type="ChEBI" id="CHEBI:33384"/>
        <dbReference type="ChEBI" id="CHEBI:78442"/>
        <dbReference type="ChEBI" id="CHEBI:78533"/>
        <dbReference type="ChEBI" id="CHEBI:456215"/>
        <dbReference type="EC" id="6.1.1.11"/>
    </reaction>
</comment>
<comment type="pathway">
    <text evidence="1">Aminoacyl-tRNA biosynthesis; selenocysteinyl-tRNA(Sec) biosynthesis; L-seryl-tRNA(Sec) from L-serine and tRNA(Sec): step 1/1.</text>
</comment>
<comment type="subunit">
    <text evidence="1">Homodimer. The tRNA molecule binds across the dimer.</text>
</comment>
<comment type="subcellular location">
    <subcellularLocation>
        <location evidence="1">Cytoplasm</location>
    </subcellularLocation>
</comment>
<comment type="domain">
    <text evidence="1">Consists of two distinct domains, a catalytic core and a N-terminal extension that is involved in tRNA binding.</text>
</comment>
<comment type="similarity">
    <text evidence="1">Belongs to the class-II aminoacyl-tRNA synthetase family. Type-1 seryl-tRNA synthetase subfamily.</text>
</comment>
<name>SYS_RICPU</name>